<dbReference type="EMBL" id="CP000419">
    <property type="protein sequence ID" value="ABJ67017.1"/>
    <property type="molecule type" value="Genomic_DNA"/>
</dbReference>
<dbReference type="RefSeq" id="WP_002952159.1">
    <property type="nucleotide sequence ID" value="NZ_CP086001.1"/>
</dbReference>
<dbReference type="SMR" id="Q03IF5"/>
<dbReference type="KEGG" id="ste:STER_1903"/>
<dbReference type="HOGENOM" id="CLU_144911_0_1_9"/>
<dbReference type="GO" id="GO:0005737">
    <property type="term" value="C:cytoplasm"/>
    <property type="evidence" value="ECO:0007669"/>
    <property type="project" value="UniProtKB-ARBA"/>
</dbReference>
<dbReference type="GO" id="GO:0015935">
    <property type="term" value="C:small ribosomal subunit"/>
    <property type="evidence" value="ECO:0007669"/>
    <property type="project" value="InterPro"/>
</dbReference>
<dbReference type="GO" id="GO:0019843">
    <property type="term" value="F:rRNA binding"/>
    <property type="evidence" value="ECO:0007669"/>
    <property type="project" value="UniProtKB-UniRule"/>
</dbReference>
<dbReference type="GO" id="GO:0003735">
    <property type="term" value="F:structural constituent of ribosome"/>
    <property type="evidence" value="ECO:0007669"/>
    <property type="project" value="InterPro"/>
</dbReference>
<dbReference type="GO" id="GO:0000028">
    <property type="term" value="P:ribosomal small subunit assembly"/>
    <property type="evidence" value="ECO:0007669"/>
    <property type="project" value="TreeGrafter"/>
</dbReference>
<dbReference type="GO" id="GO:0006412">
    <property type="term" value="P:translation"/>
    <property type="evidence" value="ECO:0007669"/>
    <property type="project" value="UniProtKB-UniRule"/>
</dbReference>
<dbReference type="FunFam" id="3.30.860.10:FF:000001">
    <property type="entry name" value="30S ribosomal protein S19"/>
    <property type="match status" value="1"/>
</dbReference>
<dbReference type="Gene3D" id="3.30.860.10">
    <property type="entry name" value="30s Ribosomal Protein S19, Chain A"/>
    <property type="match status" value="1"/>
</dbReference>
<dbReference type="HAMAP" id="MF_00531">
    <property type="entry name" value="Ribosomal_uS19"/>
    <property type="match status" value="1"/>
</dbReference>
<dbReference type="InterPro" id="IPR002222">
    <property type="entry name" value="Ribosomal_uS19"/>
</dbReference>
<dbReference type="InterPro" id="IPR005732">
    <property type="entry name" value="Ribosomal_uS19_bac-type"/>
</dbReference>
<dbReference type="InterPro" id="IPR020934">
    <property type="entry name" value="Ribosomal_uS19_CS"/>
</dbReference>
<dbReference type="InterPro" id="IPR023575">
    <property type="entry name" value="Ribosomal_uS19_SF"/>
</dbReference>
<dbReference type="NCBIfam" id="TIGR01050">
    <property type="entry name" value="rpsS_bact"/>
    <property type="match status" value="1"/>
</dbReference>
<dbReference type="PANTHER" id="PTHR11880">
    <property type="entry name" value="RIBOSOMAL PROTEIN S19P FAMILY MEMBER"/>
    <property type="match status" value="1"/>
</dbReference>
<dbReference type="PANTHER" id="PTHR11880:SF8">
    <property type="entry name" value="SMALL RIBOSOMAL SUBUNIT PROTEIN US19M"/>
    <property type="match status" value="1"/>
</dbReference>
<dbReference type="Pfam" id="PF00203">
    <property type="entry name" value="Ribosomal_S19"/>
    <property type="match status" value="1"/>
</dbReference>
<dbReference type="PIRSF" id="PIRSF002144">
    <property type="entry name" value="Ribosomal_S19"/>
    <property type="match status" value="1"/>
</dbReference>
<dbReference type="PRINTS" id="PR00975">
    <property type="entry name" value="RIBOSOMALS19"/>
</dbReference>
<dbReference type="SUPFAM" id="SSF54570">
    <property type="entry name" value="Ribosomal protein S19"/>
    <property type="match status" value="1"/>
</dbReference>
<dbReference type="PROSITE" id="PS00323">
    <property type="entry name" value="RIBOSOMAL_S19"/>
    <property type="match status" value="1"/>
</dbReference>
<name>RS19_STRTD</name>
<comment type="function">
    <text evidence="1">Protein S19 forms a complex with S13 that binds strongly to the 16S ribosomal RNA.</text>
</comment>
<comment type="similarity">
    <text evidence="1">Belongs to the universal ribosomal protein uS19 family.</text>
</comment>
<feature type="chain" id="PRO_1000051134" description="Small ribosomal subunit protein uS19">
    <location>
        <begin position="1"/>
        <end position="92"/>
    </location>
</feature>
<gene>
    <name evidence="1" type="primary">rpsS</name>
    <name type="ordered locus">STER_1903</name>
</gene>
<protein>
    <recommendedName>
        <fullName evidence="1">Small ribosomal subunit protein uS19</fullName>
    </recommendedName>
    <alternativeName>
        <fullName evidence="2">30S ribosomal protein S19</fullName>
    </alternativeName>
</protein>
<reference key="1">
    <citation type="journal article" date="2006" name="Proc. Natl. Acad. Sci. U.S.A.">
        <title>Comparative genomics of the lactic acid bacteria.</title>
        <authorList>
            <person name="Makarova K.S."/>
            <person name="Slesarev A."/>
            <person name="Wolf Y.I."/>
            <person name="Sorokin A."/>
            <person name="Mirkin B."/>
            <person name="Koonin E.V."/>
            <person name="Pavlov A."/>
            <person name="Pavlova N."/>
            <person name="Karamychev V."/>
            <person name="Polouchine N."/>
            <person name="Shakhova V."/>
            <person name="Grigoriev I."/>
            <person name="Lou Y."/>
            <person name="Rohksar D."/>
            <person name="Lucas S."/>
            <person name="Huang K."/>
            <person name="Goodstein D.M."/>
            <person name="Hawkins T."/>
            <person name="Plengvidhya V."/>
            <person name="Welker D."/>
            <person name="Hughes J."/>
            <person name="Goh Y."/>
            <person name="Benson A."/>
            <person name="Baldwin K."/>
            <person name="Lee J.-H."/>
            <person name="Diaz-Muniz I."/>
            <person name="Dosti B."/>
            <person name="Smeianov V."/>
            <person name="Wechter W."/>
            <person name="Barabote R."/>
            <person name="Lorca G."/>
            <person name="Altermann E."/>
            <person name="Barrangou R."/>
            <person name="Ganesan B."/>
            <person name="Xie Y."/>
            <person name="Rawsthorne H."/>
            <person name="Tamir D."/>
            <person name="Parker C."/>
            <person name="Breidt F."/>
            <person name="Broadbent J.R."/>
            <person name="Hutkins R."/>
            <person name="O'Sullivan D."/>
            <person name="Steele J."/>
            <person name="Unlu G."/>
            <person name="Saier M.H. Jr."/>
            <person name="Klaenhammer T."/>
            <person name="Richardson P."/>
            <person name="Kozyavkin S."/>
            <person name="Weimer B.C."/>
            <person name="Mills D.A."/>
        </authorList>
    </citation>
    <scope>NUCLEOTIDE SEQUENCE [LARGE SCALE GENOMIC DNA]</scope>
    <source>
        <strain>ATCC BAA-491 / LMD-9</strain>
    </source>
</reference>
<proteinExistence type="inferred from homology"/>
<accession>Q03IF5</accession>
<evidence type="ECO:0000255" key="1">
    <source>
        <dbReference type="HAMAP-Rule" id="MF_00531"/>
    </source>
</evidence>
<evidence type="ECO:0000305" key="2"/>
<sequence>MGRSLKKGPFVDGHLMKKVEAQANDEKKKVIKTWSRRSTIFPSFIGYTIAVYDGRKHVPVYIQEDMVGHKLGEFAPTRTYKGHAADDKKTRR</sequence>
<keyword id="KW-0687">Ribonucleoprotein</keyword>
<keyword id="KW-0689">Ribosomal protein</keyword>
<keyword id="KW-0694">RNA-binding</keyword>
<keyword id="KW-0699">rRNA-binding</keyword>
<organism>
    <name type="scientific">Streptococcus thermophilus (strain ATCC BAA-491 / LMD-9)</name>
    <dbReference type="NCBI Taxonomy" id="322159"/>
    <lineage>
        <taxon>Bacteria</taxon>
        <taxon>Bacillati</taxon>
        <taxon>Bacillota</taxon>
        <taxon>Bacilli</taxon>
        <taxon>Lactobacillales</taxon>
        <taxon>Streptococcaceae</taxon>
        <taxon>Streptococcus</taxon>
    </lineage>
</organism>